<accession>P97443</accession>
<accession>P97442</accession>
<accession>P97444</accession>
<accession>Q6DFW7</accession>
<keyword id="KW-0002">3D-structure</keyword>
<keyword id="KW-0025">Alternative splicing</keyword>
<keyword id="KW-0963">Cytoplasm</keyword>
<keyword id="KW-0238">DNA-binding</keyword>
<keyword id="KW-0479">Metal-binding</keyword>
<keyword id="KW-0489">Methyltransferase</keyword>
<keyword id="KW-0539">Nucleus</keyword>
<keyword id="KW-1185">Reference proteome</keyword>
<keyword id="KW-0678">Repressor</keyword>
<keyword id="KW-0949">S-adenosyl-L-methionine</keyword>
<keyword id="KW-0804">Transcription</keyword>
<keyword id="KW-0805">Transcription regulation</keyword>
<keyword id="KW-0808">Transferase</keyword>
<keyword id="KW-0862">Zinc</keyword>
<keyword id="KW-0863">Zinc-finger</keyword>
<protein>
    <recommendedName>
        <fullName>Histone-lysine N-methyltransferase Smyd1</fullName>
        <ecNumber evidence="5">2.1.1.354</ecNumber>
    </recommendedName>
    <alternativeName>
        <fullName>CD8b-opposite</fullName>
    </alternativeName>
    <alternativeName>
        <fullName>SET and MYND domain-containing protein 1</fullName>
    </alternativeName>
    <alternativeName>
        <fullName>Zinc finger protein BOP</fullName>
        <shortName>m-BOP</shortName>
    </alternativeName>
</protein>
<reference evidence="8" key="1">
    <citation type="journal article" date="1997" name="J. Immunol.">
        <title>The Bop gene adjacent to the mouse CD8b gene encodes distinct zinc-finger proteins expressed in CTLs and in muscle.</title>
        <authorList>
            <person name="Hwang I."/>
            <person name="Gottlieb P.D."/>
        </authorList>
    </citation>
    <scope>NUCLEOTIDE SEQUENCE [MRNA] (ISOFORMS 1; 2 AND 3)</scope>
    <scope>TISSUE SPECIFICITY</scope>
    <scope>VARIANTS ARG-95; LEU-160 AND THR-344</scope>
    <source>
        <strain evidence="6">BALB/cJ</strain>
        <strain evidence="6">C57BL/6J</strain>
        <tissue evidence="6">Skeletal muscle</tissue>
        <tissue evidence="6">Spleen</tissue>
    </source>
</reference>
<reference evidence="8" key="2">
    <citation type="submission" date="1999-09" db="EMBL/GenBank/DDBJ databases">
        <authorList>
            <person name="Gottlieb P.D."/>
            <person name="Hwang I."/>
        </authorList>
    </citation>
    <scope>SEQUENCE REVISION TO N-TERMINUS</scope>
</reference>
<reference key="3">
    <citation type="journal article" date="2005" name="Science">
        <title>The transcriptional landscape of the mammalian genome.</title>
        <authorList>
            <person name="Carninci P."/>
            <person name="Kasukawa T."/>
            <person name="Katayama S."/>
            <person name="Gough J."/>
            <person name="Frith M.C."/>
            <person name="Maeda N."/>
            <person name="Oyama R."/>
            <person name="Ravasi T."/>
            <person name="Lenhard B."/>
            <person name="Wells C."/>
            <person name="Kodzius R."/>
            <person name="Shimokawa K."/>
            <person name="Bajic V.B."/>
            <person name="Brenner S.E."/>
            <person name="Batalov S."/>
            <person name="Forrest A.R."/>
            <person name="Zavolan M."/>
            <person name="Davis M.J."/>
            <person name="Wilming L.G."/>
            <person name="Aidinis V."/>
            <person name="Allen J.E."/>
            <person name="Ambesi-Impiombato A."/>
            <person name="Apweiler R."/>
            <person name="Aturaliya R.N."/>
            <person name="Bailey T.L."/>
            <person name="Bansal M."/>
            <person name="Baxter L."/>
            <person name="Beisel K.W."/>
            <person name="Bersano T."/>
            <person name="Bono H."/>
            <person name="Chalk A.M."/>
            <person name="Chiu K.P."/>
            <person name="Choudhary V."/>
            <person name="Christoffels A."/>
            <person name="Clutterbuck D.R."/>
            <person name="Crowe M.L."/>
            <person name="Dalla E."/>
            <person name="Dalrymple B.P."/>
            <person name="de Bono B."/>
            <person name="Della Gatta G."/>
            <person name="di Bernardo D."/>
            <person name="Down T."/>
            <person name="Engstrom P."/>
            <person name="Fagiolini M."/>
            <person name="Faulkner G."/>
            <person name="Fletcher C.F."/>
            <person name="Fukushima T."/>
            <person name="Furuno M."/>
            <person name="Futaki S."/>
            <person name="Gariboldi M."/>
            <person name="Georgii-Hemming P."/>
            <person name="Gingeras T.R."/>
            <person name="Gojobori T."/>
            <person name="Green R.E."/>
            <person name="Gustincich S."/>
            <person name="Harbers M."/>
            <person name="Hayashi Y."/>
            <person name="Hensch T.K."/>
            <person name="Hirokawa N."/>
            <person name="Hill D."/>
            <person name="Huminiecki L."/>
            <person name="Iacono M."/>
            <person name="Ikeo K."/>
            <person name="Iwama A."/>
            <person name="Ishikawa T."/>
            <person name="Jakt M."/>
            <person name="Kanapin A."/>
            <person name="Katoh M."/>
            <person name="Kawasawa Y."/>
            <person name="Kelso J."/>
            <person name="Kitamura H."/>
            <person name="Kitano H."/>
            <person name="Kollias G."/>
            <person name="Krishnan S.P."/>
            <person name="Kruger A."/>
            <person name="Kummerfeld S.K."/>
            <person name="Kurochkin I.V."/>
            <person name="Lareau L.F."/>
            <person name="Lazarevic D."/>
            <person name="Lipovich L."/>
            <person name="Liu J."/>
            <person name="Liuni S."/>
            <person name="McWilliam S."/>
            <person name="Madan Babu M."/>
            <person name="Madera M."/>
            <person name="Marchionni L."/>
            <person name="Matsuda H."/>
            <person name="Matsuzawa S."/>
            <person name="Miki H."/>
            <person name="Mignone F."/>
            <person name="Miyake S."/>
            <person name="Morris K."/>
            <person name="Mottagui-Tabar S."/>
            <person name="Mulder N."/>
            <person name="Nakano N."/>
            <person name="Nakauchi H."/>
            <person name="Ng P."/>
            <person name="Nilsson R."/>
            <person name="Nishiguchi S."/>
            <person name="Nishikawa S."/>
            <person name="Nori F."/>
            <person name="Ohara O."/>
            <person name="Okazaki Y."/>
            <person name="Orlando V."/>
            <person name="Pang K.C."/>
            <person name="Pavan W.J."/>
            <person name="Pavesi G."/>
            <person name="Pesole G."/>
            <person name="Petrovsky N."/>
            <person name="Piazza S."/>
            <person name="Reed J."/>
            <person name="Reid J.F."/>
            <person name="Ring B.Z."/>
            <person name="Ringwald M."/>
            <person name="Rost B."/>
            <person name="Ruan Y."/>
            <person name="Salzberg S.L."/>
            <person name="Sandelin A."/>
            <person name="Schneider C."/>
            <person name="Schoenbach C."/>
            <person name="Sekiguchi K."/>
            <person name="Semple C.A."/>
            <person name="Seno S."/>
            <person name="Sessa L."/>
            <person name="Sheng Y."/>
            <person name="Shibata Y."/>
            <person name="Shimada H."/>
            <person name="Shimada K."/>
            <person name="Silva D."/>
            <person name="Sinclair B."/>
            <person name="Sperling S."/>
            <person name="Stupka E."/>
            <person name="Sugiura K."/>
            <person name="Sultana R."/>
            <person name="Takenaka Y."/>
            <person name="Taki K."/>
            <person name="Tammoja K."/>
            <person name="Tan S.L."/>
            <person name="Tang S."/>
            <person name="Taylor M.S."/>
            <person name="Tegner J."/>
            <person name="Teichmann S.A."/>
            <person name="Ueda H.R."/>
            <person name="van Nimwegen E."/>
            <person name="Verardo R."/>
            <person name="Wei C.L."/>
            <person name="Yagi K."/>
            <person name="Yamanishi H."/>
            <person name="Zabarovsky E."/>
            <person name="Zhu S."/>
            <person name="Zimmer A."/>
            <person name="Hide W."/>
            <person name="Bult C."/>
            <person name="Grimmond S.M."/>
            <person name="Teasdale R.D."/>
            <person name="Liu E.T."/>
            <person name="Brusic V."/>
            <person name="Quackenbush J."/>
            <person name="Wahlestedt C."/>
            <person name="Mattick J.S."/>
            <person name="Hume D.A."/>
            <person name="Kai C."/>
            <person name="Sasaki D."/>
            <person name="Tomaru Y."/>
            <person name="Fukuda S."/>
            <person name="Kanamori-Katayama M."/>
            <person name="Suzuki M."/>
            <person name="Aoki J."/>
            <person name="Arakawa T."/>
            <person name="Iida J."/>
            <person name="Imamura K."/>
            <person name="Itoh M."/>
            <person name="Kato T."/>
            <person name="Kawaji H."/>
            <person name="Kawagashira N."/>
            <person name="Kawashima T."/>
            <person name="Kojima M."/>
            <person name="Kondo S."/>
            <person name="Konno H."/>
            <person name="Nakano K."/>
            <person name="Ninomiya N."/>
            <person name="Nishio T."/>
            <person name="Okada M."/>
            <person name="Plessy C."/>
            <person name="Shibata K."/>
            <person name="Shiraki T."/>
            <person name="Suzuki S."/>
            <person name="Tagami M."/>
            <person name="Waki K."/>
            <person name="Watahiki A."/>
            <person name="Okamura-Oho Y."/>
            <person name="Suzuki H."/>
            <person name="Kawai J."/>
            <person name="Hayashizaki Y."/>
        </authorList>
    </citation>
    <scope>NUCLEOTIDE SEQUENCE [LARGE SCALE MRNA] (ISOFORM 1)</scope>
    <source>
        <strain>C57BL/6J</strain>
        <tissue>Heart</tissue>
    </source>
</reference>
<reference evidence="8" key="4">
    <citation type="submission" date="2005-07" db="EMBL/GenBank/DDBJ databases">
        <authorList>
            <person name="Mural R.J."/>
            <person name="Adams M.D."/>
            <person name="Myers E.W."/>
            <person name="Smith H.O."/>
            <person name="Venter J.C."/>
        </authorList>
    </citation>
    <scope>NUCLEOTIDE SEQUENCE [LARGE SCALE GENOMIC DNA]</scope>
</reference>
<reference key="5">
    <citation type="journal article" date="2004" name="Genome Res.">
        <title>The status, quality, and expansion of the NIH full-length cDNA project: the Mammalian Gene Collection (MGC).</title>
        <authorList>
            <consortium name="The MGC Project Team"/>
        </authorList>
    </citation>
    <scope>NUCLEOTIDE SEQUENCE [LARGE SCALE MRNA] (ISOFOFRM 1)</scope>
    <source>
        <strain>C57BL/6J</strain>
        <tissue>Eye</tissue>
    </source>
</reference>
<reference evidence="8" key="6">
    <citation type="journal article" date="2002" name="Nat. Genet.">
        <title>Bop encodes a muscle-restricted protein containing MYND and SET domains and is essential for cardiac differentiation and morphogenesis.</title>
        <authorList>
            <person name="Gottlieb P.D."/>
            <person name="Pierce S.A."/>
            <person name="Sims R.J. III"/>
            <person name="Yamagishi H."/>
            <person name="Weihe E.K."/>
            <person name="Harriss J.V."/>
            <person name="Maika S.D."/>
            <person name="Kuziel W.A."/>
            <person name="King H.L."/>
            <person name="Olson E.N."/>
            <person name="Nakagawa O."/>
            <person name="Srivastava D."/>
        </authorList>
    </citation>
    <scope>FUNCTION</scope>
    <scope>SUBCELLULAR LOCATION</scope>
    <scope>TISSUE SPECIFICITY</scope>
    <scope>INTERACTION WITH HDAC1; HDAC2 AND HDAC3</scope>
</reference>
<reference key="7">
    <citation type="journal article" date="2010" name="Cell">
        <title>A tissue-specific atlas of mouse protein phosphorylation and expression.</title>
        <authorList>
            <person name="Huttlin E.L."/>
            <person name="Jedrychowski M.P."/>
            <person name="Elias J.E."/>
            <person name="Goswami T."/>
            <person name="Rad R."/>
            <person name="Beausoleil S.A."/>
            <person name="Villen J."/>
            <person name="Haas W."/>
            <person name="Sowa M.E."/>
            <person name="Gygi S.P."/>
        </authorList>
    </citation>
    <scope>IDENTIFICATION BY MASS SPECTROMETRY [LARGE SCALE ANALYSIS]</scope>
    <source>
        <tissue>Heart</tissue>
    </source>
</reference>
<reference key="8">
    <citation type="journal article" date="2010" name="J. Biol. Chem.">
        <title>Crystal structure of cardiac-specific histone methyltransferase SmyD1 reveals unusual active site architecture.</title>
        <authorList>
            <person name="Sirinupong N."/>
            <person name="Brunzelle J."/>
            <person name="Ye J."/>
            <person name="Pirzada A."/>
            <person name="Nico L."/>
            <person name="Yang Z."/>
        </authorList>
    </citation>
    <scope>X-RAY CRYSTALLOGRAPHY (2.3 ANGSTROMS) IN COMPLEX WITH S-ADENOSYL-ORNITHINE</scope>
    <scope>CATALYTIC ACTIVITY</scope>
    <scope>ZINC-BINDING SITES</scope>
    <scope>FUNCTION</scope>
    <scope>INTERACTION WITH NACA ISOFORM SKNAC</scope>
</reference>
<dbReference type="EC" id="2.1.1.354" evidence="5"/>
<dbReference type="EMBL" id="U76371">
    <property type="protein sequence ID" value="AAC53020.1"/>
    <property type="molecule type" value="mRNA"/>
</dbReference>
<dbReference type="EMBL" id="U76373">
    <property type="protein sequence ID" value="AAC53021.2"/>
    <property type="status" value="ALT_INIT"/>
    <property type="molecule type" value="mRNA"/>
</dbReference>
<dbReference type="EMBL" id="U76374">
    <property type="protein sequence ID" value="AAC53022.2"/>
    <property type="status" value="ALT_INIT"/>
    <property type="molecule type" value="mRNA"/>
</dbReference>
<dbReference type="EMBL" id="AK142252">
    <property type="protein sequence ID" value="BAE24995.1"/>
    <property type="molecule type" value="mRNA"/>
</dbReference>
<dbReference type="EMBL" id="CH466523">
    <property type="protein sequence ID" value="EDK98934.1"/>
    <property type="molecule type" value="Genomic_DNA"/>
</dbReference>
<dbReference type="EMBL" id="BC076601">
    <property type="protein sequence ID" value="AAH76601.1"/>
    <property type="molecule type" value="mRNA"/>
</dbReference>
<dbReference type="CCDS" id="CCDS20227.2">
    <molecule id="P97443-2"/>
</dbReference>
<dbReference type="CCDS" id="CCDS51805.1">
    <molecule id="P97443-1"/>
</dbReference>
<dbReference type="RefSeq" id="NP_001153599.1">
    <molecule id="P97443-1"/>
    <property type="nucleotide sequence ID" value="NM_001160127.1"/>
</dbReference>
<dbReference type="RefSeq" id="NP_033892.2">
    <molecule id="P97443-2"/>
    <property type="nucleotide sequence ID" value="NM_009762.2"/>
</dbReference>
<dbReference type="PDB" id="3N71">
    <property type="method" value="X-ray"/>
    <property type="resolution" value="2.30 A"/>
    <property type="chains" value="A=1-490"/>
</dbReference>
<dbReference type="PDBsum" id="3N71"/>
<dbReference type="SMR" id="P97443"/>
<dbReference type="BioGRID" id="198379">
    <property type="interactions" value="11"/>
</dbReference>
<dbReference type="ELM" id="P97443"/>
<dbReference type="FunCoup" id="P97443">
    <property type="interactions" value="1104"/>
</dbReference>
<dbReference type="IntAct" id="P97443">
    <property type="interactions" value="1"/>
</dbReference>
<dbReference type="STRING" id="10090.ENSMUSP00000073911"/>
<dbReference type="GlyGen" id="P97443">
    <property type="glycosylation" value="1 site, 1 O-linked glycan (1 site)"/>
</dbReference>
<dbReference type="iPTMnet" id="P97443"/>
<dbReference type="PhosphoSitePlus" id="P97443"/>
<dbReference type="jPOST" id="P97443"/>
<dbReference type="PaxDb" id="10090-ENSMUSP00000073911"/>
<dbReference type="ProteomicsDB" id="261586">
    <molecule id="P97443-1"/>
</dbReference>
<dbReference type="ProteomicsDB" id="261587">
    <molecule id="P97443-2"/>
</dbReference>
<dbReference type="ProteomicsDB" id="261588">
    <molecule id="P97443-3"/>
</dbReference>
<dbReference type="Antibodypedia" id="47498">
    <property type="antibodies" value="224 antibodies from 27 providers"/>
</dbReference>
<dbReference type="DNASU" id="12180"/>
<dbReference type="Ensembl" id="ENSMUST00000074301.10">
    <molecule id="P97443-1"/>
    <property type="protein sequence ID" value="ENSMUSP00000073911.4"/>
    <property type="gene ID" value="ENSMUSG00000055027.18"/>
</dbReference>
<dbReference type="Ensembl" id="ENSMUST00000114186.9">
    <molecule id="P97443-2"/>
    <property type="protein sequence ID" value="ENSMUSP00000109824.3"/>
    <property type="gene ID" value="ENSMUSG00000055027.18"/>
</dbReference>
<dbReference type="GeneID" id="12180"/>
<dbReference type="KEGG" id="mmu:12180"/>
<dbReference type="UCSC" id="uc009cgj.2">
    <molecule id="P97443-1"/>
    <property type="organism name" value="mouse"/>
</dbReference>
<dbReference type="AGR" id="MGI:104790"/>
<dbReference type="CTD" id="150572"/>
<dbReference type="MGI" id="MGI:104790">
    <property type="gene designation" value="Smyd1"/>
</dbReference>
<dbReference type="VEuPathDB" id="HostDB:ENSMUSG00000055027"/>
<dbReference type="eggNOG" id="KOG2084">
    <property type="taxonomic scope" value="Eukaryota"/>
</dbReference>
<dbReference type="GeneTree" id="ENSGT00940000156114"/>
<dbReference type="HOGENOM" id="CLU_018406_1_1_1"/>
<dbReference type="InParanoid" id="P97443"/>
<dbReference type="OMA" id="KWYFDCQ"/>
<dbReference type="OrthoDB" id="1028014at2759"/>
<dbReference type="PhylomeDB" id="P97443"/>
<dbReference type="TreeFam" id="TF106487"/>
<dbReference type="BioGRID-ORCS" id="12180">
    <property type="hits" value="0 hits in 82 CRISPR screens"/>
</dbReference>
<dbReference type="ChiTaRS" id="Smyd1">
    <property type="organism name" value="mouse"/>
</dbReference>
<dbReference type="EvolutionaryTrace" id="P97443"/>
<dbReference type="PRO" id="PR:P97443"/>
<dbReference type="Proteomes" id="UP000000589">
    <property type="component" value="Chromosome 6"/>
</dbReference>
<dbReference type="RNAct" id="P97443">
    <property type="molecule type" value="protein"/>
</dbReference>
<dbReference type="Bgee" id="ENSMUSG00000055027">
    <property type="expression patterns" value="Expressed in hindlimb stylopod muscle and 158 other cell types or tissues"/>
</dbReference>
<dbReference type="ExpressionAtlas" id="P97443">
    <property type="expression patterns" value="baseline and differential"/>
</dbReference>
<dbReference type="GO" id="GO:0005737">
    <property type="term" value="C:cytoplasm"/>
    <property type="evidence" value="ECO:0000314"/>
    <property type="project" value="MGI"/>
</dbReference>
<dbReference type="GO" id="GO:0005654">
    <property type="term" value="C:nucleoplasm"/>
    <property type="evidence" value="ECO:0000304"/>
    <property type="project" value="Reactome"/>
</dbReference>
<dbReference type="GO" id="GO:0005634">
    <property type="term" value="C:nucleus"/>
    <property type="evidence" value="ECO:0000314"/>
    <property type="project" value="MGI"/>
</dbReference>
<dbReference type="GO" id="GO:0003677">
    <property type="term" value="F:DNA binding"/>
    <property type="evidence" value="ECO:0007669"/>
    <property type="project" value="UniProtKB-KW"/>
</dbReference>
<dbReference type="GO" id="GO:0140999">
    <property type="term" value="F:histone H3K4 trimethyltransferase activity"/>
    <property type="evidence" value="ECO:0007669"/>
    <property type="project" value="UniProtKB-EC"/>
</dbReference>
<dbReference type="GO" id="GO:0003714">
    <property type="term" value="F:transcription corepressor activity"/>
    <property type="evidence" value="ECO:0000314"/>
    <property type="project" value="MGI"/>
</dbReference>
<dbReference type="GO" id="GO:0008270">
    <property type="term" value="F:zinc ion binding"/>
    <property type="evidence" value="ECO:0007669"/>
    <property type="project" value="UniProtKB-KW"/>
</dbReference>
<dbReference type="GO" id="GO:0006338">
    <property type="term" value="P:chromatin remodeling"/>
    <property type="evidence" value="ECO:0000353"/>
    <property type="project" value="MGI"/>
</dbReference>
<dbReference type="GO" id="GO:0007507">
    <property type="term" value="P:heart development"/>
    <property type="evidence" value="ECO:0000315"/>
    <property type="project" value="MGI"/>
</dbReference>
<dbReference type="GO" id="GO:0032259">
    <property type="term" value="P:methylation"/>
    <property type="evidence" value="ECO:0007669"/>
    <property type="project" value="UniProtKB-KW"/>
</dbReference>
<dbReference type="GO" id="GO:0045892">
    <property type="term" value="P:negative regulation of DNA-templated transcription"/>
    <property type="evidence" value="ECO:0000314"/>
    <property type="project" value="MGI"/>
</dbReference>
<dbReference type="GO" id="GO:0045663">
    <property type="term" value="P:positive regulation of myoblast differentiation"/>
    <property type="evidence" value="ECO:0007669"/>
    <property type="project" value="Ensembl"/>
</dbReference>
<dbReference type="GO" id="GO:0010831">
    <property type="term" value="P:positive regulation of myotube differentiation"/>
    <property type="evidence" value="ECO:0007669"/>
    <property type="project" value="Ensembl"/>
</dbReference>
<dbReference type="GO" id="GO:0035914">
    <property type="term" value="P:skeletal muscle cell differentiation"/>
    <property type="evidence" value="ECO:0000315"/>
    <property type="project" value="MGI"/>
</dbReference>
<dbReference type="CDD" id="cd10526">
    <property type="entry name" value="SET_SMYD1"/>
    <property type="match status" value="1"/>
</dbReference>
<dbReference type="FunFam" id="1.25.40.10:FF:000132">
    <property type="entry name" value="Histone-lysine N-methyltransferase SMYD1 isoform 1"/>
    <property type="match status" value="1"/>
</dbReference>
<dbReference type="FunFam" id="1.25.40.970:FF:000001">
    <property type="entry name" value="Histone-lysine N-methyltransferase SMYD1 isoform 1"/>
    <property type="match status" value="1"/>
</dbReference>
<dbReference type="FunFam" id="2.170.270.10:FF:000013">
    <property type="entry name" value="Histone-lysine N-methyltransferase SMYD1 isoform 1"/>
    <property type="match status" value="1"/>
</dbReference>
<dbReference type="FunFam" id="6.10.140.2220:FF:000005">
    <property type="entry name" value="Histone-lysine N-methyltransferase SMYD1 isoform 1"/>
    <property type="match status" value="1"/>
</dbReference>
<dbReference type="FunFam" id="1.10.220.160:FF:000002">
    <property type="entry name" value="SET and MYND domain containing 1"/>
    <property type="match status" value="1"/>
</dbReference>
<dbReference type="Gene3D" id="1.10.220.160">
    <property type="match status" value="1"/>
</dbReference>
<dbReference type="Gene3D" id="1.25.40.970">
    <property type="match status" value="1"/>
</dbReference>
<dbReference type="Gene3D" id="6.10.140.2220">
    <property type="match status" value="1"/>
</dbReference>
<dbReference type="Gene3D" id="2.170.270.10">
    <property type="entry name" value="SET domain"/>
    <property type="match status" value="1"/>
</dbReference>
<dbReference type="Gene3D" id="1.25.40.10">
    <property type="entry name" value="Tetratricopeptide repeat domain"/>
    <property type="match status" value="1"/>
</dbReference>
<dbReference type="InterPro" id="IPR050869">
    <property type="entry name" value="H3K4_H4K5_MeTrfase"/>
</dbReference>
<dbReference type="InterPro" id="IPR001214">
    <property type="entry name" value="SET_dom"/>
</dbReference>
<dbReference type="InterPro" id="IPR046341">
    <property type="entry name" value="SET_dom_sf"/>
</dbReference>
<dbReference type="InterPro" id="IPR044418">
    <property type="entry name" value="SMYD1_SET"/>
</dbReference>
<dbReference type="InterPro" id="IPR011990">
    <property type="entry name" value="TPR-like_helical_dom_sf"/>
</dbReference>
<dbReference type="InterPro" id="IPR002893">
    <property type="entry name" value="Znf_MYND"/>
</dbReference>
<dbReference type="PANTHER" id="PTHR12197">
    <property type="entry name" value="HISTONE-LYSINE N-METHYLTRANSFERASE SMYD"/>
    <property type="match status" value="1"/>
</dbReference>
<dbReference type="PANTHER" id="PTHR12197:SF184">
    <property type="entry name" value="HISTONE-LYSINE N-METHYLTRANSFERASE SMYD1"/>
    <property type="match status" value="1"/>
</dbReference>
<dbReference type="Pfam" id="PF00856">
    <property type="entry name" value="SET"/>
    <property type="match status" value="1"/>
</dbReference>
<dbReference type="Pfam" id="PF01753">
    <property type="entry name" value="zf-MYND"/>
    <property type="match status" value="1"/>
</dbReference>
<dbReference type="SMART" id="SM00317">
    <property type="entry name" value="SET"/>
    <property type="match status" value="1"/>
</dbReference>
<dbReference type="SUPFAM" id="SSF82199">
    <property type="entry name" value="SET domain"/>
    <property type="match status" value="1"/>
</dbReference>
<dbReference type="PROSITE" id="PS50280">
    <property type="entry name" value="SET"/>
    <property type="match status" value="1"/>
</dbReference>
<dbReference type="PROSITE" id="PS01360">
    <property type="entry name" value="ZF_MYND_1"/>
    <property type="match status" value="1"/>
</dbReference>
<dbReference type="PROSITE" id="PS50865">
    <property type="entry name" value="ZF_MYND_2"/>
    <property type="match status" value="1"/>
</dbReference>
<evidence type="ECO:0000250" key="1"/>
<evidence type="ECO:0000255" key="2">
    <source>
        <dbReference type="PROSITE-ProRule" id="PRU00134"/>
    </source>
</evidence>
<evidence type="ECO:0000255" key="3">
    <source>
        <dbReference type="PROSITE-ProRule" id="PRU00190"/>
    </source>
</evidence>
<evidence type="ECO:0000269" key="4">
    <source>
    </source>
</evidence>
<evidence type="ECO:0000269" key="5">
    <source>
    </source>
</evidence>
<evidence type="ECO:0000269" key="6">
    <source>
    </source>
</evidence>
<evidence type="ECO:0000303" key="7">
    <source>
    </source>
</evidence>
<evidence type="ECO:0000305" key="8"/>
<evidence type="ECO:0007829" key="9">
    <source>
        <dbReference type="PDB" id="3N71"/>
    </source>
</evidence>
<proteinExistence type="evidence at protein level"/>
<feature type="chain" id="PRO_0000218308" description="Histone-lysine N-methyltransferase Smyd1">
    <location>
        <begin position="1"/>
        <end position="490"/>
    </location>
</feature>
<feature type="domain" description="SET" evidence="3">
    <location>
        <begin position="7"/>
        <end position="253"/>
    </location>
</feature>
<feature type="zinc finger region" description="MYND-type" evidence="2">
    <location>
        <begin position="52"/>
        <end position="90"/>
    </location>
</feature>
<feature type="binding site">
    <location>
        <begin position="17"/>
        <end position="19"/>
    </location>
    <ligand>
        <name>S-adenosyl-L-methionine</name>
        <dbReference type="ChEBI" id="CHEBI:59789"/>
    </ligand>
</feature>
<feature type="binding site" evidence="2">
    <location>
        <position position="52"/>
    </location>
    <ligand>
        <name>Zn(2+)</name>
        <dbReference type="ChEBI" id="CHEBI:29105"/>
        <label>1</label>
    </ligand>
</feature>
<feature type="binding site" evidence="2">
    <location>
        <position position="55"/>
    </location>
    <ligand>
        <name>Zn(2+)</name>
        <dbReference type="ChEBI" id="CHEBI:29105"/>
        <label>1</label>
    </ligand>
</feature>
<feature type="binding site" evidence="2">
    <location>
        <position position="65"/>
    </location>
    <ligand>
        <name>Zn(2+)</name>
        <dbReference type="ChEBI" id="CHEBI:29105"/>
        <label>2</label>
    </ligand>
</feature>
<feature type="binding site" evidence="2">
    <location>
        <position position="68"/>
    </location>
    <ligand>
        <name>Zn(2+)</name>
        <dbReference type="ChEBI" id="CHEBI:29105"/>
        <label>2</label>
    </ligand>
</feature>
<feature type="binding site" evidence="2">
    <location>
        <position position="74"/>
    </location>
    <ligand>
        <name>Zn(2+)</name>
        <dbReference type="ChEBI" id="CHEBI:29105"/>
        <label>1</label>
    </ligand>
</feature>
<feature type="binding site" evidence="2">
    <location>
        <position position="78"/>
    </location>
    <ligand>
        <name>Zn(2+)</name>
        <dbReference type="ChEBI" id="CHEBI:29105"/>
        <label>1</label>
    </ligand>
</feature>
<feature type="binding site" evidence="2">
    <location>
        <position position="86"/>
    </location>
    <ligand>
        <name>Zn(2+)</name>
        <dbReference type="ChEBI" id="CHEBI:29105"/>
        <label>2</label>
    </ligand>
</feature>
<feature type="binding site" evidence="2">
    <location>
        <position position="90"/>
    </location>
    <ligand>
        <name>Zn(2+)</name>
        <dbReference type="ChEBI" id="CHEBI:29105"/>
        <label>2</label>
    </ligand>
</feature>
<feature type="binding site">
    <location>
        <position position="135"/>
    </location>
    <ligand>
        <name>S-adenosyl-L-methionine</name>
        <dbReference type="ChEBI" id="CHEBI:59789"/>
    </ligand>
</feature>
<feature type="binding site">
    <location>
        <begin position="205"/>
        <end position="206"/>
    </location>
    <ligand>
        <name>S-adenosyl-L-methionine</name>
        <dbReference type="ChEBI" id="CHEBI:59789"/>
    </ligand>
</feature>
<feature type="binding site">
    <location>
        <position position="208"/>
    </location>
    <ligand>
        <name>Zn(2+)</name>
        <dbReference type="ChEBI" id="CHEBI:29105"/>
    </ligand>
</feature>
<feature type="binding site" evidence="1">
    <location>
        <begin position="270"/>
        <end position="272"/>
    </location>
    <ligand>
        <name>S-adenosyl-L-methionine</name>
        <dbReference type="ChEBI" id="CHEBI:59789"/>
    </ligand>
</feature>
<feature type="binding site">
    <location>
        <position position="274"/>
    </location>
    <ligand>
        <name>Zn(2+)</name>
        <dbReference type="ChEBI" id="CHEBI:29105"/>
    </ligand>
</feature>
<feature type="binding site">
    <location>
        <position position="276"/>
    </location>
    <ligand>
        <name>Zn(2+)</name>
        <dbReference type="ChEBI" id="CHEBI:29105"/>
    </ligand>
</feature>
<feature type="binding site">
    <location>
        <position position="279"/>
    </location>
    <ligand>
        <name>Zn(2+)</name>
        <dbReference type="ChEBI" id="CHEBI:29105"/>
    </ligand>
</feature>
<feature type="splice variant" id="VSP_050402" description="In isoform 3." evidence="7">
    <original>MENVEVFTSEGKGRGLKATKEFWAADVIFAERAYSAVVFD</original>
    <variation>MKNGEACGGWQ</variation>
    <location>
        <begin position="6"/>
        <end position="45"/>
    </location>
</feature>
<feature type="splice variant" id="VSP_050403" description="In isoform 2." evidence="7">
    <original>N</original>
    <variation>K</variation>
    <location>
        <position position="220"/>
    </location>
</feature>
<feature type="splice variant" id="VSP_050404" description="In isoform 2." evidence="7">
    <location>
        <begin position="221"/>
        <end position="233"/>
    </location>
</feature>
<feature type="sequence variant" description="In strain: C57BL/6." evidence="6">
    <original>K</original>
    <variation>R</variation>
    <location>
        <position position="95"/>
    </location>
</feature>
<feature type="sequence variant" description="In strain: C57BL/6." evidence="6">
    <original>P</original>
    <variation>L</variation>
    <location>
        <position position="160"/>
    </location>
</feature>
<feature type="sequence variant" description="In strain: C57BL/6." evidence="6">
    <original>A</original>
    <variation>T</variation>
    <location>
        <position position="344"/>
    </location>
</feature>
<feature type="strand" evidence="9">
    <location>
        <begin position="9"/>
        <end position="13"/>
    </location>
</feature>
<feature type="strand" evidence="9">
    <location>
        <begin position="15"/>
        <end position="17"/>
    </location>
</feature>
<feature type="strand" evidence="9">
    <location>
        <begin position="19"/>
        <end position="25"/>
    </location>
</feature>
<feature type="strand" evidence="9">
    <location>
        <begin position="32"/>
        <end position="36"/>
    </location>
</feature>
<feature type="strand" evidence="9">
    <location>
        <begin position="39"/>
        <end position="43"/>
    </location>
</feature>
<feature type="helix" evidence="9">
    <location>
        <begin position="45"/>
        <end position="47"/>
    </location>
</feature>
<feature type="turn" evidence="9">
    <location>
        <begin position="48"/>
        <end position="50"/>
    </location>
</feature>
<feature type="turn" evidence="9">
    <location>
        <begin position="53"/>
        <end position="55"/>
    </location>
</feature>
<feature type="turn" evidence="9">
    <location>
        <begin position="66"/>
        <end position="68"/>
    </location>
</feature>
<feature type="strand" evidence="9">
    <location>
        <begin position="72"/>
        <end position="75"/>
    </location>
</feature>
<feature type="helix" evidence="9">
    <location>
        <begin position="76"/>
        <end position="96"/>
    </location>
</feature>
<feature type="helix" evidence="9">
    <location>
        <begin position="102"/>
        <end position="116"/>
    </location>
</feature>
<feature type="strand" evidence="9">
    <location>
        <begin position="119"/>
        <end position="121"/>
    </location>
</feature>
<feature type="strand" evidence="9">
    <location>
        <begin position="126"/>
        <end position="128"/>
    </location>
</feature>
<feature type="helix" evidence="9">
    <location>
        <begin position="129"/>
        <end position="131"/>
    </location>
</feature>
<feature type="helix" evidence="9">
    <location>
        <begin position="136"/>
        <end position="138"/>
    </location>
</feature>
<feature type="helix" evidence="9">
    <location>
        <begin position="141"/>
        <end position="157"/>
    </location>
</feature>
<feature type="helix" evidence="9">
    <location>
        <begin position="167"/>
        <end position="178"/>
    </location>
</feature>
<feature type="strand" evidence="9">
    <location>
        <begin position="181"/>
        <end position="185"/>
    </location>
</feature>
<feature type="strand" evidence="9">
    <location>
        <begin position="191"/>
        <end position="197"/>
    </location>
</feature>
<feature type="helix" evidence="9">
    <location>
        <begin position="201"/>
        <end position="203"/>
    </location>
</feature>
<feature type="strand" evidence="9">
    <location>
        <begin position="211"/>
        <end position="217"/>
    </location>
</feature>
<feature type="strand" evidence="9">
    <location>
        <begin position="222"/>
        <end position="224"/>
    </location>
</feature>
<feature type="helix" evidence="9">
    <location>
        <begin position="228"/>
        <end position="230"/>
    </location>
</feature>
<feature type="strand" evidence="9">
    <location>
        <begin position="233"/>
        <end position="240"/>
    </location>
</feature>
<feature type="helix" evidence="9">
    <location>
        <begin position="259"/>
        <end position="270"/>
    </location>
</feature>
<feature type="helix" evidence="9">
    <location>
        <begin position="277"/>
        <end position="281"/>
    </location>
</feature>
<feature type="turn" evidence="9">
    <location>
        <begin position="282"/>
        <end position="284"/>
    </location>
</feature>
<feature type="helix" evidence="9">
    <location>
        <begin position="285"/>
        <end position="288"/>
    </location>
</feature>
<feature type="strand" evidence="9">
    <location>
        <begin position="293"/>
        <end position="295"/>
    </location>
</feature>
<feature type="helix" evidence="9">
    <location>
        <begin position="299"/>
        <end position="320"/>
    </location>
</feature>
<feature type="turn" evidence="9">
    <location>
        <begin position="321"/>
        <end position="323"/>
    </location>
</feature>
<feature type="helix" evidence="9">
    <location>
        <begin position="325"/>
        <end position="339"/>
    </location>
</feature>
<feature type="turn" evidence="9">
    <location>
        <begin position="340"/>
        <end position="342"/>
    </location>
</feature>
<feature type="helix" evidence="9">
    <location>
        <begin position="348"/>
        <end position="363"/>
    </location>
</feature>
<feature type="helix" evidence="9">
    <location>
        <begin position="367"/>
        <end position="384"/>
    </location>
</feature>
<feature type="helix" evidence="9">
    <location>
        <begin position="390"/>
        <end position="405"/>
    </location>
</feature>
<feature type="helix" evidence="9">
    <location>
        <begin position="409"/>
        <end position="426"/>
    </location>
</feature>
<feature type="helix" evidence="9">
    <location>
        <begin position="432"/>
        <end position="465"/>
    </location>
</feature>
<comment type="function">
    <text evidence="4 5">Methylates histone H3 at 'Lys-4' (H3K4me). Acts as a transcriptional repressor. Essential for cardiomyocyte differentiation and cardiac morphogenesis.</text>
</comment>
<comment type="catalytic activity">
    <reaction evidence="5">
        <text>L-lysyl(4)-[histone H3] + 3 S-adenosyl-L-methionine = N(6),N(6),N(6)-trimethyl-L-lysyl(4)-[histone H3] + 3 S-adenosyl-L-homocysteine + 3 H(+)</text>
        <dbReference type="Rhea" id="RHEA:60260"/>
        <dbReference type="Rhea" id="RHEA-COMP:15537"/>
        <dbReference type="Rhea" id="RHEA-COMP:15547"/>
        <dbReference type="ChEBI" id="CHEBI:15378"/>
        <dbReference type="ChEBI" id="CHEBI:29969"/>
        <dbReference type="ChEBI" id="CHEBI:57856"/>
        <dbReference type="ChEBI" id="CHEBI:59789"/>
        <dbReference type="ChEBI" id="CHEBI:61961"/>
        <dbReference type="EC" id="2.1.1.354"/>
    </reaction>
</comment>
<comment type="subunit">
    <text evidence="4 5">Interacts with HDAC1, HDAC2 and HDAC3. Interacts (via MYND-type zinc finger) with NACA isoform skNAC.</text>
</comment>
<comment type="subcellular location">
    <subcellularLocation>
        <location evidence="4">Cytoplasm</location>
    </subcellularLocation>
    <subcellularLocation>
        <location evidence="4">Nucleus</location>
    </subcellularLocation>
</comment>
<comment type="alternative products">
    <event type="alternative splicing"/>
    <isoform>
        <id>P97443-1</id>
        <name>1</name>
        <name evidence="6">ISKM-BOP1</name>
        <sequence type="displayed"/>
    </isoform>
    <isoform>
        <id>P97443-2</id>
        <name>2</name>
        <name evidence="6">SKM-BOP2</name>
        <sequence type="described" ref="VSP_050403 VSP_050404"/>
    </isoform>
    <isoform>
        <id>P97443-3</id>
        <name>3</name>
        <name evidence="6">T-BOP</name>
        <sequence type="described" ref="VSP_050402"/>
    </isoform>
</comment>
<comment type="tissue specificity">
    <text evidence="4 6">Expressed in cardiac and skeletal muscle, lymphocytes and thymus.</text>
</comment>
<comment type="domain">
    <text>The SET domain is split between the S-sequence (residues 1-49) and the core SET domain (residues 181-258), however the two segments still come together to form a conserved SET domain fold.</text>
</comment>
<comment type="similarity">
    <text evidence="3">Belongs to the class V-like SAM-binding methyltransferase superfamily.</text>
</comment>
<comment type="sequence caution" evidence="8">
    <conflict type="erroneous initiation">
        <sequence resource="EMBL-CDS" id="AAC53021"/>
    </conflict>
    <text>Truncated N-terminus.</text>
</comment>
<comment type="sequence caution" evidence="8">
    <conflict type="erroneous initiation">
        <sequence resource="EMBL-CDS" id="AAC53022"/>
    </conflict>
    <text>Truncated N-terminus.</text>
</comment>
<sequence>MTIGSMENVEVFTSEGKGRGLKATKEFWAADVIFAERAYSAVVFDSLINFVCHTCFKRQEKLHRCGQCKFAHYCDRTCQKDAWLNHKNECAAIKKYGKVPNENIRLAARIMWRVEREGTGLTEGCLVSVDDLQNHVEHFGEEEQKELRVDVDTFLQYWPPQSQQFSMQYISHIFGVINCNGFTLSDQRGLQAVGVGIFPNLGLVNHDCWPNCTVIFNNGNHEAVKSMFHTQMRIELRALGKISEGEELTVSYIDFLHLSEERRRQLKKQYYFDCSCEHCQKGLKDDLFLAAKEDPKPSQEVVKEMIQFSKDTLEKIDKARSEGLYHEVVKLCRECLEKQEPVFADTNLYVLRLLSIASEVLSYLQAYEEASHYARRMVDGYMKLYHHNNAQLGMAVMRAGLTNWHAGHIEVGHGMICKAYAILLVTHGPSHPITKDLEAMRMQTEMELRMFRQNEFMYHKMREAALNNQPMQVMAEPSNEPAPALFHKKQ</sequence>
<name>SMYD1_MOUSE</name>
<gene>
    <name type="primary">Smyd1</name>
    <name type="synonym">Bop</name>
</gene>
<organism>
    <name type="scientific">Mus musculus</name>
    <name type="common">Mouse</name>
    <dbReference type="NCBI Taxonomy" id="10090"/>
    <lineage>
        <taxon>Eukaryota</taxon>
        <taxon>Metazoa</taxon>
        <taxon>Chordata</taxon>
        <taxon>Craniata</taxon>
        <taxon>Vertebrata</taxon>
        <taxon>Euteleostomi</taxon>
        <taxon>Mammalia</taxon>
        <taxon>Eutheria</taxon>
        <taxon>Euarchontoglires</taxon>
        <taxon>Glires</taxon>
        <taxon>Rodentia</taxon>
        <taxon>Myomorpha</taxon>
        <taxon>Muroidea</taxon>
        <taxon>Muridae</taxon>
        <taxon>Murinae</taxon>
        <taxon>Mus</taxon>
        <taxon>Mus</taxon>
    </lineage>
</organism>